<keyword id="KW-0002">3D-structure</keyword>
<keyword id="KW-0067">ATP-binding</keyword>
<keyword id="KW-0963">Cytoplasm</keyword>
<keyword id="KW-0418">Kinase</keyword>
<keyword id="KW-0547">Nucleotide-binding</keyword>
<keyword id="KW-0539">Nucleus</keyword>
<keyword id="KW-0665">Pyrimidine biosynthesis</keyword>
<keyword id="KW-1185">Reference proteome</keyword>
<keyword id="KW-0808">Transferase</keyword>
<evidence type="ECO:0000255" key="1">
    <source>
        <dbReference type="HAMAP-Rule" id="MF_03172"/>
    </source>
</evidence>
<evidence type="ECO:0000269" key="2">
    <source>
    </source>
</evidence>
<evidence type="ECO:0000269" key="3">
    <source>
    </source>
</evidence>
<evidence type="ECO:0000269" key="4">
    <source>
    </source>
</evidence>
<evidence type="ECO:0000269" key="5">
    <source>
    </source>
</evidence>
<evidence type="ECO:0000269" key="6">
    <source>
    </source>
</evidence>
<evidence type="ECO:0000269" key="7">
    <source>
    </source>
</evidence>
<evidence type="ECO:0000269" key="8">
    <source>
    </source>
</evidence>
<evidence type="ECO:0000269" key="9">
    <source>
    </source>
</evidence>
<evidence type="ECO:0000269" key="10">
    <source>
    </source>
</evidence>
<evidence type="ECO:0000269" key="11">
    <source ref="8"/>
</evidence>
<evidence type="ECO:0000305" key="12">
    <source>
    </source>
</evidence>
<evidence type="ECO:0000305" key="13">
    <source>
    </source>
</evidence>
<evidence type="ECO:0000305" key="14">
    <source>
    </source>
</evidence>
<evidence type="ECO:0000305" key="15">
    <source>
    </source>
</evidence>
<evidence type="ECO:0000305" key="16">
    <source>
    </source>
</evidence>
<evidence type="ECO:0000305" key="17">
    <source ref="8"/>
</evidence>
<evidence type="ECO:0007829" key="18">
    <source>
        <dbReference type="PDB" id="1UKZ"/>
    </source>
</evidence>
<gene>
    <name evidence="1" type="primary">URA6</name>
    <name type="synonym">SOC8</name>
    <name type="ordered locus">YKL024C</name>
</gene>
<dbReference type="EC" id="2.7.4.14" evidence="1"/>
<dbReference type="EMBL" id="M31455">
    <property type="protein sequence ID" value="AAA35194.1"/>
    <property type="molecule type" value="Genomic_DNA"/>
</dbReference>
<dbReference type="EMBL" id="M69295">
    <property type="protein sequence ID" value="AAA35200.1"/>
    <property type="molecule type" value="Genomic_DNA"/>
</dbReference>
<dbReference type="EMBL" id="Z28024">
    <property type="protein sequence ID" value="CAA81859.1"/>
    <property type="molecule type" value="Genomic_DNA"/>
</dbReference>
<dbReference type="EMBL" id="AY558074">
    <property type="protein sequence ID" value="AAS56400.1"/>
    <property type="molecule type" value="Genomic_DNA"/>
</dbReference>
<dbReference type="EMBL" id="BK006944">
    <property type="protein sequence ID" value="DAA09130.1"/>
    <property type="molecule type" value="Genomic_DNA"/>
</dbReference>
<dbReference type="PIR" id="A33572">
    <property type="entry name" value="A33572"/>
</dbReference>
<dbReference type="RefSeq" id="NP_012901.3">
    <property type="nucleotide sequence ID" value="NM_001179590.3"/>
</dbReference>
<dbReference type="PDB" id="1UKY">
    <property type="method" value="X-ray"/>
    <property type="resolution" value="2.13 A"/>
    <property type="chains" value="A=2-204"/>
</dbReference>
<dbReference type="PDB" id="1UKZ">
    <property type="method" value="X-ray"/>
    <property type="resolution" value="1.90 A"/>
    <property type="chains" value="A=2-204"/>
</dbReference>
<dbReference type="PDBsum" id="1UKY"/>
<dbReference type="PDBsum" id="1UKZ"/>
<dbReference type="SMR" id="P15700"/>
<dbReference type="BioGRID" id="34107">
    <property type="interactions" value="290"/>
</dbReference>
<dbReference type="DIP" id="DIP-4756N"/>
<dbReference type="FunCoup" id="P15700">
    <property type="interactions" value="850"/>
</dbReference>
<dbReference type="IntAct" id="P15700">
    <property type="interactions" value="52"/>
</dbReference>
<dbReference type="MINT" id="P15700"/>
<dbReference type="STRING" id="4932.YKL024C"/>
<dbReference type="iPTMnet" id="P15700"/>
<dbReference type="PaxDb" id="4932-YKL024C"/>
<dbReference type="PeptideAtlas" id="P15700"/>
<dbReference type="EnsemblFungi" id="YKL024C_mRNA">
    <property type="protein sequence ID" value="YKL024C"/>
    <property type="gene ID" value="YKL024C"/>
</dbReference>
<dbReference type="GeneID" id="853844"/>
<dbReference type="KEGG" id="sce:YKL024C"/>
<dbReference type="AGR" id="SGD:S000001507"/>
<dbReference type="SGD" id="S000001507">
    <property type="gene designation" value="URA6"/>
</dbReference>
<dbReference type="VEuPathDB" id="FungiDB:YKL024C"/>
<dbReference type="eggNOG" id="KOG3079">
    <property type="taxonomic scope" value="Eukaryota"/>
</dbReference>
<dbReference type="GeneTree" id="ENSGT00940000160589"/>
<dbReference type="HOGENOM" id="CLU_032354_0_2_1"/>
<dbReference type="InParanoid" id="P15700"/>
<dbReference type="OMA" id="EQTMPVI"/>
<dbReference type="OrthoDB" id="442176at2759"/>
<dbReference type="BioCyc" id="MetaCyc:YKL024C-MONOMER"/>
<dbReference type="BioCyc" id="YEAST:YKL024C-MONOMER"/>
<dbReference type="BRENDA" id="2.7.4.B1">
    <property type="organism ID" value="984"/>
</dbReference>
<dbReference type="Reactome" id="R-SCE-499943">
    <property type="pathway name" value="Interconversion of nucleotide di- and triphosphates"/>
</dbReference>
<dbReference type="BioGRID-ORCS" id="853844">
    <property type="hits" value="6 hits in 10 CRISPR screens"/>
</dbReference>
<dbReference type="EvolutionaryTrace" id="P15700"/>
<dbReference type="PRO" id="PR:P15700"/>
<dbReference type="Proteomes" id="UP000002311">
    <property type="component" value="Chromosome XI"/>
</dbReference>
<dbReference type="RNAct" id="P15700">
    <property type="molecule type" value="protein"/>
</dbReference>
<dbReference type="GO" id="GO:0005737">
    <property type="term" value="C:cytoplasm"/>
    <property type="evidence" value="ECO:0000314"/>
    <property type="project" value="SGD"/>
</dbReference>
<dbReference type="GO" id="GO:0005634">
    <property type="term" value="C:nucleus"/>
    <property type="evidence" value="ECO:0000314"/>
    <property type="project" value="SGD"/>
</dbReference>
<dbReference type="GO" id="GO:0004127">
    <property type="term" value="F:(d)CMP kinase activity"/>
    <property type="evidence" value="ECO:0000318"/>
    <property type="project" value="GO_Central"/>
</dbReference>
<dbReference type="GO" id="GO:0004017">
    <property type="term" value="F:adenylate kinase activity"/>
    <property type="evidence" value="ECO:0000314"/>
    <property type="project" value="SGD"/>
</dbReference>
<dbReference type="GO" id="GO:0005524">
    <property type="term" value="F:ATP binding"/>
    <property type="evidence" value="ECO:0007669"/>
    <property type="project" value="UniProtKB-KW"/>
</dbReference>
<dbReference type="GO" id="GO:0033862">
    <property type="term" value="F:UMP kinase activity"/>
    <property type="evidence" value="ECO:0000318"/>
    <property type="project" value="GO_Central"/>
</dbReference>
<dbReference type="GO" id="GO:0009041">
    <property type="term" value="F:UMP/dUMP kinase activity"/>
    <property type="evidence" value="ECO:0000314"/>
    <property type="project" value="SGD"/>
</dbReference>
<dbReference type="GO" id="GO:0006207">
    <property type="term" value="P:'de novo' pyrimidine nucleobase biosynthetic process"/>
    <property type="evidence" value="ECO:0000314"/>
    <property type="project" value="SGD"/>
</dbReference>
<dbReference type="GO" id="GO:0046705">
    <property type="term" value="P:CDP biosynthetic process"/>
    <property type="evidence" value="ECO:0000318"/>
    <property type="project" value="GO_Central"/>
</dbReference>
<dbReference type="GO" id="GO:0006139">
    <property type="term" value="P:nucleobase-containing compound metabolic process"/>
    <property type="evidence" value="ECO:0000314"/>
    <property type="project" value="SGD"/>
</dbReference>
<dbReference type="GO" id="GO:0006225">
    <property type="term" value="P:UDP biosynthetic process"/>
    <property type="evidence" value="ECO:0000318"/>
    <property type="project" value="GO_Central"/>
</dbReference>
<dbReference type="CDD" id="cd01428">
    <property type="entry name" value="ADK"/>
    <property type="match status" value="1"/>
</dbReference>
<dbReference type="FunFam" id="3.40.50.300:FF:000315">
    <property type="entry name" value="Adenylate kinase 1"/>
    <property type="match status" value="1"/>
</dbReference>
<dbReference type="Gene3D" id="3.40.50.300">
    <property type="entry name" value="P-loop containing nucleotide triphosphate hydrolases"/>
    <property type="match status" value="1"/>
</dbReference>
<dbReference type="HAMAP" id="MF_00235">
    <property type="entry name" value="Adenylate_kinase_Adk"/>
    <property type="match status" value="1"/>
</dbReference>
<dbReference type="HAMAP" id="MF_03172">
    <property type="entry name" value="Adenylate_kinase_UMP_CMP_kin"/>
    <property type="match status" value="1"/>
</dbReference>
<dbReference type="InterPro" id="IPR000850">
    <property type="entry name" value="Adenylat/UMP-CMP_kin"/>
</dbReference>
<dbReference type="InterPro" id="IPR033690">
    <property type="entry name" value="Adenylat_kinase_CS"/>
</dbReference>
<dbReference type="InterPro" id="IPR027417">
    <property type="entry name" value="P-loop_NTPase"/>
</dbReference>
<dbReference type="InterPro" id="IPR006266">
    <property type="entry name" value="UMP_CMP_kinase"/>
</dbReference>
<dbReference type="NCBIfam" id="TIGR01359">
    <property type="entry name" value="UMP_CMP_kin_fam"/>
    <property type="match status" value="1"/>
</dbReference>
<dbReference type="PANTHER" id="PTHR23359">
    <property type="entry name" value="NUCLEOTIDE KINASE"/>
    <property type="match status" value="1"/>
</dbReference>
<dbReference type="Pfam" id="PF00406">
    <property type="entry name" value="ADK"/>
    <property type="match status" value="1"/>
</dbReference>
<dbReference type="PRINTS" id="PR00094">
    <property type="entry name" value="ADENYLTKNASE"/>
</dbReference>
<dbReference type="SUPFAM" id="SSF52540">
    <property type="entry name" value="P-loop containing nucleoside triphosphate hydrolases"/>
    <property type="match status" value="1"/>
</dbReference>
<dbReference type="PROSITE" id="PS00113">
    <property type="entry name" value="ADENYLATE_KINASE"/>
    <property type="match status" value="1"/>
</dbReference>
<comment type="function">
    <text evidence="1 2 6 10 11">Catalyzes the phosphorylation of pyrimidine nucleoside monophosphates at the expense of ATP. Plays an important role in de novo pyrimidine nucleotide biosynthesis. Has preference for UMP and dUMP as phosphate acceptors, but can also use CMP, dCMP, AMP, GMP, dGMP and dTMP. ATP and dATP are the best phosphate donors, but can also use GTP, dGTP, dCTP, and dTTP to some degree.</text>
</comment>
<comment type="catalytic activity">
    <reaction evidence="1 2 4 5 6 7">
        <text>UMP + ATP = UDP + ADP</text>
        <dbReference type="Rhea" id="RHEA:24400"/>
        <dbReference type="ChEBI" id="CHEBI:30616"/>
        <dbReference type="ChEBI" id="CHEBI:57865"/>
        <dbReference type="ChEBI" id="CHEBI:58223"/>
        <dbReference type="ChEBI" id="CHEBI:456216"/>
        <dbReference type="EC" id="2.7.4.14"/>
    </reaction>
</comment>
<comment type="cofactor">
    <cofactor evidence="1 4 10">
        <name>Mg(2+)</name>
        <dbReference type="ChEBI" id="CHEBI:18420"/>
    </cofactor>
    <text evidence="1 4 10">Binds 1 Mg(2+) ion per monomer.</text>
</comment>
<comment type="biophysicochemical properties">
    <kinetics>
        <KM evidence="6">0.15 mM for UMP</KM>
        <KM evidence="6">1 mM for dUMP</KM>
        <KM evidence="6">1.8 mM for dTMP</KM>
        <KM evidence="4">0.11 mM for ATP</KM>
        <KM evidence="4">0.53 mM for dCMP</KM>
        <Vmax evidence="4">120.0 umol/min/mg enzyme (for dCDP synthesis)</Vmax>
    </kinetics>
    <phDependence>
        <text evidence="10">Optimum pH is 6-9.5.</text>
    </phDependence>
</comment>
<comment type="subunit">
    <text evidence="1 6 8 9">Monomer.</text>
</comment>
<comment type="subcellular location">
    <subcellularLocation>
        <location evidence="1 2 10">Cytoplasm</location>
    </subcellularLocation>
    <subcellularLocation>
        <location evidence="1 2 10">Nucleus</location>
    </subcellularLocation>
    <text evidence="1 10">Predominantly cytoplasmic.</text>
</comment>
<comment type="domain">
    <text evidence="1 14 15">Consists of three domains, a large central CORE domain and two small peripheral domains, NMPbind and LID, which undergo movements during catalysis. The LID domain closes over the site of phosphoryl transfer upon ATP binding. Assembling and dissambling the active center during each catalytic cycle provides an effective means to prevent ATP hydrolysis.</text>
</comment>
<comment type="miscellaneous">
    <text evidence="3">Present with 1500 molecules/cell in log phase SD medium.</text>
</comment>
<comment type="similarity">
    <text evidence="1">Belongs to the adenylate kinase family. UMP-CMP kinase subfamily.</text>
</comment>
<comment type="caution">
    <text evidence="12 13 16 17">There is controversy about the substrate specificity of the enzyme. Next to the primary substrate UMP, PubMed:1333436 and Ref.8 report that the enzyme also accepts CMP and AMP as nucleoside monophosphates, but not GMP, whereas PubMed:2172245 and PubMed:8391780 report activity with GMP and dTMP, but not AMP or CMP.</text>
</comment>
<protein>
    <recommendedName>
        <fullName evidence="1">Uridylate kinase</fullName>
        <shortName evidence="1">UK</shortName>
        <ecNumber evidence="1">2.7.4.14</ecNumber>
    </recommendedName>
    <alternativeName>
        <fullName evidence="1">ATP:UMP phosphotransferase</fullName>
    </alternativeName>
    <alternativeName>
        <fullName evidence="1">Deoxycytidylate kinase</fullName>
        <shortName evidence="1">CK</shortName>
        <shortName evidence="1">dCMP kinase</shortName>
    </alternativeName>
    <alternativeName>
        <fullName>Suppressor of cdc8 protein</fullName>
    </alternativeName>
    <alternativeName>
        <fullName evidence="1">Uridine monophosphate kinase</fullName>
        <shortName evidence="1">UMP kinase</shortName>
        <shortName evidence="1">UMPK</shortName>
    </alternativeName>
</protein>
<proteinExistence type="evidence at protein level"/>
<feature type="chain" id="PRO_0000158947" description="Uridylate kinase">
    <location>
        <begin position="1"/>
        <end position="204"/>
    </location>
</feature>
<feature type="region of interest" description="NMP" evidence="1 8 9">
    <location>
        <begin position="46"/>
        <end position="76"/>
    </location>
</feature>
<feature type="region of interest" description="LID" evidence="1 8 9">
    <location>
        <begin position="141"/>
        <end position="151"/>
    </location>
</feature>
<feature type="binding site" evidence="1 8 9">
    <location>
        <begin position="26"/>
        <end position="31"/>
    </location>
    <ligand>
        <name>ATP</name>
        <dbReference type="ChEBI" id="CHEBI:30616"/>
    </ligand>
</feature>
<feature type="binding site" evidence="1 8 9">
    <location>
        <position position="52"/>
    </location>
    <ligand>
        <name>a ribonucleoside 5'-phosphate</name>
        <dbReference type="ChEBI" id="CHEBI:58043"/>
    </ligand>
</feature>
<feature type="binding site" evidence="1 8 9">
    <location>
        <begin position="74"/>
        <end position="76"/>
    </location>
    <ligand>
        <name>a ribonucleoside 5'-phosphate</name>
        <dbReference type="ChEBI" id="CHEBI:58043"/>
    </ligand>
</feature>
<feature type="binding site" evidence="1 8 9">
    <location>
        <begin position="104"/>
        <end position="107"/>
    </location>
    <ligand>
        <name>a ribonucleoside 5'-phosphate</name>
        <dbReference type="ChEBI" id="CHEBI:58043"/>
    </ligand>
</feature>
<feature type="binding site" evidence="1 8 9">
    <location>
        <position position="111"/>
    </location>
    <ligand>
        <name>a ribonucleoside 5'-phosphate</name>
        <dbReference type="ChEBI" id="CHEBI:58043"/>
    </ligand>
</feature>
<feature type="binding site" evidence="1 8 9">
    <location>
        <position position="142"/>
    </location>
    <ligand>
        <name>ATP</name>
        <dbReference type="ChEBI" id="CHEBI:30616"/>
    </ligand>
</feature>
<feature type="binding site" evidence="1 8 9">
    <location>
        <position position="148"/>
    </location>
    <ligand>
        <name>a ribonucleoside 5'-phosphate</name>
        <dbReference type="ChEBI" id="CHEBI:58043"/>
    </ligand>
</feature>
<feature type="binding site" evidence="1 8 9">
    <location>
        <position position="159"/>
    </location>
    <ligand>
        <name>a ribonucleoside 5'-phosphate</name>
        <dbReference type="ChEBI" id="CHEBI:58043"/>
    </ligand>
</feature>
<feature type="binding site" evidence="1 8 9">
    <location>
        <position position="187"/>
    </location>
    <ligand>
        <name>ATP</name>
        <dbReference type="ChEBI" id="CHEBI:30616"/>
    </ligand>
</feature>
<feature type="mutagenesis site" description="Abolishes catalytic activity." evidence="5">
    <original>K</original>
    <variation>E</variation>
    <location>
        <position position="29"/>
    </location>
</feature>
<feature type="turn" evidence="18">
    <location>
        <begin position="13"/>
        <end position="15"/>
    </location>
</feature>
<feature type="strand" evidence="18">
    <location>
        <begin position="17"/>
        <end position="22"/>
    </location>
</feature>
<feature type="helix" evidence="18">
    <location>
        <begin position="29"/>
        <end position="39"/>
    </location>
</feature>
<feature type="strand" evidence="18">
    <location>
        <begin position="43"/>
        <end position="46"/>
    </location>
</feature>
<feature type="helix" evidence="18">
    <location>
        <begin position="47"/>
        <end position="56"/>
    </location>
</feature>
<feature type="helix" evidence="18">
    <location>
        <begin position="63"/>
        <end position="71"/>
    </location>
</feature>
<feature type="helix" evidence="18">
    <location>
        <begin position="78"/>
        <end position="94"/>
    </location>
</feature>
<feature type="strand" evidence="18">
    <location>
        <begin position="99"/>
        <end position="103"/>
    </location>
</feature>
<feature type="helix" evidence="18">
    <location>
        <begin position="109"/>
        <end position="118"/>
    </location>
</feature>
<feature type="strand" evidence="18">
    <location>
        <begin position="123"/>
        <end position="129"/>
    </location>
</feature>
<feature type="helix" evidence="18">
    <location>
        <begin position="132"/>
        <end position="146"/>
    </location>
</feature>
<feature type="helix" evidence="18">
    <location>
        <begin position="153"/>
        <end position="165"/>
    </location>
</feature>
<feature type="helix" evidence="18">
    <location>
        <begin position="168"/>
        <end position="175"/>
    </location>
</feature>
<feature type="turn" evidence="18">
    <location>
        <begin position="176"/>
        <end position="178"/>
    </location>
</feature>
<feature type="strand" evidence="18">
    <location>
        <begin position="180"/>
        <end position="184"/>
    </location>
</feature>
<feature type="helix" evidence="18">
    <location>
        <begin position="189"/>
        <end position="203"/>
    </location>
</feature>
<name>KCY_YEAST</name>
<reference key="1">
    <citation type="journal article" date="1989" name="Biochem. Biophys. Res. Commun.">
        <title>Primary structure of the S. cerevisiae gene encoding uridine monophosphokinase.</title>
        <authorList>
            <person name="Liljelund P."/>
            <person name="Sanni A."/>
            <person name="Friesen J.D."/>
            <person name="Lacroute F."/>
        </authorList>
    </citation>
    <scope>NUCLEOTIDE SEQUENCE [GENOMIC DNA]</scope>
    <source>
        <strain>FL100A</strain>
    </source>
</reference>
<reference key="2">
    <citation type="journal article" date="1991" name="J. Biol. Chem.">
        <title>Molecular characterization of Saccharomyces cerevisiae URA6 gene. DNA sequence, mutagenesis analysis, and cell cycle regulation relevant to its suppression mechanism to cdc8 mutation.</title>
        <authorList>
            <person name="Jiang Z."/>
            <person name="Abaigar L.T."/>
            <person name="Huang S.-H."/>
            <person name="Cai B."/>
            <person name="Jong A.Y."/>
        </authorList>
    </citation>
    <scope>NUCLEOTIDE SEQUENCE [GENOMIC DNA]</scope>
    <scope>CATALYTIC ACTIVITY</scope>
    <scope>MUTAGENESIS OF LYS-29</scope>
</reference>
<reference key="3">
    <citation type="journal article" date="1994" name="Nature">
        <title>Complete DNA sequence of yeast chromosome XI.</title>
        <authorList>
            <person name="Dujon B."/>
            <person name="Alexandraki D."/>
            <person name="Andre B."/>
            <person name="Ansorge W."/>
            <person name="Baladron V."/>
            <person name="Ballesta J.P.G."/>
            <person name="Banrevi A."/>
            <person name="Bolle P.-A."/>
            <person name="Bolotin-Fukuhara M."/>
            <person name="Bossier P."/>
            <person name="Bou G."/>
            <person name="Boyer J."/>
            <person name="Buitrago M.J."/>
            <person name="Cheret G."/>
            <person name="Colleaux L."/>
            <person name="Daignan-Fornier B."/>
            <person name="del Rey F."/>
            <person name="Dion C."/>
            <person name="Domdey H."/>
            <person name="Duesterhoeft A."/>
            <person name="Duesterhus S."/>
            <person name="Entian K.-D."/>
            <person name="Erfle H."/>
            <person name="Esteban P.F."/>
            <person name="Feldmann H."/>
            <person name="Fernandes L."/>
            <person name="Fobo G.M."/>
            <person name="Fritz C."/>
            <person name="Fukuhara H."/>
            <person name="Gabel C."/>
            <person name="Gaillon L."/>
            <person name="Garcia-Cantalejo J.M."/>
            <person name="Garcia-Ramirez J.J."/>
            <person name="Gent M.E."/>
            <person name="Ghazvini M."/>
            <person name="Goffeau A."/>
            <person name="Gonzalez A."/>
            <person name="Grothues D."/>
            <person name="Guerreiro P."/>
            <person name="Hegemann J.H."/>
            <person name="Hewitt N."/>
            <person name="Hilger F."/>
            <person name="Hollenberg C.P."/>
            <person name="Horaitis O."/>
            <person name="Indge K.J."/>
            <person name="Jacquier A."/>
            <person name="James C.M."/>
            <person name="Jauniaux J.-C."/>
            <person name="Jimenez A."/>
            <person name="Keuchel H."/>
            <person name="Kirchrath L."/>
            <person name="Kleine K."/>
            <person name="Koetter P."/>
            <person name="Legrain P."/>
            <person name="Liebl S."/>
            <person name="Louis E.J."/>
            <person name="Maia e Silva A."/>
            <person name="Marck C."/>
            <person name="Monnier A.-L."/>
            <person name="Moestl D."/>
            <person name="Mueller S."/>
            <person name="Obermaier B."/>
            <person name="Oliver S.G."/>
            <person name="Pallier C."/>
            <person name="Pascolo S."/>
            <person name="Pfeiffer F."/>
            <person name="Philippsen P."/>
            <person name="Planta R.J."/>
            <person name="Pohl F.M."/>
            <person name="Pohl T.M."/>
            <person name="Poehlmann R."/>
            <person name="Portetelle D."/>
            <person name="Purnelle B."/>
            <person name="Puzos V."/>
            <person name="Ramezani Rad M."/>
            <person name="Rasmussen S.W."/>
            <person name="Remacha M.A."/>
            <person name="Revuelta J.L."/>
            <person name="Richard G.-F."/>
            <person name="Rieger M."/>
            <person name="Rodrigues-Pousada C."/>
            <person name="Rose M."/>
            <person name="Rupp T."/>
            <person name="Santos M.A."/>
            <person name="Schwager C."/>
            <person name="Sensen C."/>
            <person name="Skala J."/>
            <person name="Soares H."/>
            <person name="Sor F."/>
            <person name="Stegemann J."/>
            <person name="Tettelin H."/>
            <person name="Thierry A."/>
            <person name="Tzermia M."/>
            <person name="Urrestarazu L.A."/>
            <person name="van Dyck L."/>
            <person name="van Vliet-Reedijk J.C."/>
            <person name="Valens M."/>
            <person name="Vandenbol M."/>
            <person name="Vilela C."/>
            <person name="Vissers S."/>
            <person name="von Wettstein D."/>
            <person name="Voss H."/>
            <person name="Wiemann S."/>
            <person name="Xu G."/>
            <person name="Zimmermann J."/>
            <person name="Haasemann M."/>
            <person name="Becker I."/>
            <person name="Mewes H.-W."/>
        </authorList>
    </citation>
    <scope>NUCLEOTIDE SEQUENCE [LARGE SCALE GENOMIC DNA]</scope>
    <source>
        <strain>ATCC 204508 / S288c</strain>
    </source>
</reference>
<reference key="4">
    <citation type="journal article" date="2014" name="G3 (Bethesda)">
        <title>The reference genome sequence of Saccharomyces cerevisiae: Then and now.</title>
        <authorList>
            <person name="Engel S.R."/>
            <person name="Dietrich F.S."/>
            <person name="Fisk D.G."/>
            <person name="Binkley G."/>
            <person name="Balakrishnan R."/>
            <person name="Costanzo M.C."/>
            <person name="Dwight S.S."/>
            <person name="Hitz B.C."/>
            <person name="Karra K."/>
            <person name="Nash R.S."/>
            <person name="Weng S."/>
            <person name="Wong E.D."/>
            <person name="Lloyd P."/>
            <person name="Skrzypek M.S."/>
            <person name="Miyasato S.R."/>
            <person name="Simison M."/>
            <person name="Cherry J.M."/>
        </authorList>
    </citation>
    <scope>GENOME REANNOTATION</scope>
    <source>
        <strain>ATCC 204508 / S288c</strain>
    </source>
</reference>
<reference key="5">
    <citation type="journal article" date="2007" name="Genome Res.">
        <title>Approaching a complete repository of sequence-verified protein-encoding clones for Saccharomyces cerevisiae.</title>
        <authorList>
            <person name="Hu Y."/>
            <person name="Rolfs A."/>
            <person name="Bhullar B."/>
            <person name="Murthy T.V.S."/>
            <person name="Zhu C."/>
            <person name="Berger M.F."/>
            <person name="Camargo A.A."/>
            <person name="Kelley F."/>
            <person name="McCarron S."/>
            <person name="Jepson D."/>
            <person name="Richardson A."/>
            <person name="Raphael J."/>
            <person name="Moreira D."/>
            <person name="Taycher E."/>
            <person name="Zuo D."/>
            <person name="Mohr S."/>
            <person name="Kane M.F."/>
            <person name="Williamson J."/>
            <person name="Simpson A.J.G."/>
            <person name="Bulyk M.L."/>
            <person name="Harlow E."/>
            <person name="Marsischky G."/>
            <person name="Kolodner R.D."/>
            <person name="LaBaer J."/>
        </authorList>
    </citation>
    <scope>NUCLEOTIDE SEQUENCE [GENOMIC DNA]</scope>
    <source>
        <strain>ATCC 204508 / S288c</strain>
    </source>
</reference>
<reference key="6">
    <citation type="journal article" date="1989" name="J. Biol. Chem.">
        <title>The Saccharomyces cerevisiae SOC8-1 gene and its relationship to a nucleotide kinase.</title>
        <authorList>
            <person name="Choi W.J."/>
            <person name="Campbell J.L."/>
            <person name="Kuo C.L."/>
            <person name="Jong A.Y."/>
        </authorList>
    </citation>
    <scope>CATALYTIC ACTIVITY</scope>
</reference>
<reference key="7">
    <citation type="journal article" date="1990" name="J. Biol. Chem.">
        <title>Purification and characterization of Saccharomyces cerevisiae uridine monophosphate kinase.</title>
        <authorList>
            <person name="Ma J.J."/>
            <person name="Huang S.H."/>
            <person name="Jong A.Y."/>
        </authorList>
    </citation>
    <scope>FUNCTION</scope>
    <scope>CATALYTIC ACTIVITY</scope>
    <scope>SUBUNIT</scope>
    <scope>BIOPHYSICOCHEMICAL PROPERTIES</scope>
    <scope>SUBSTRATE SPECIFICITY</scope>
</reference>
<reference key="8">
    <citation type="thesis" date="1990" institute="Universitaet Freiburg im Breisgau" country="Germany">
        <title>Reinigung, charakterisierung und kristallisation der uridylatkinase aus Hefe.</title>
        <authorList>
            <person name="Mueller-Dieckmann H.-J."/>
        </authorList>
    </citation>
    <scope>FUNCTION</scope>
    <scope>SUBSTRATE SPECIFICITY</scope>
</reference>
<reference key="9">
    <citation type="journal article" date="1992" name="Gene">
        <title>The adenylate kinase family in yeast: identification of URA6 as a multicopy suppressor of deficiency in major AMP kinase.</title>
        <authorList>
            <person name="Schricker R."/>
            <person name="Magdolen V."/>
            <person name="Kaniak A."/>
            <person name="Wolf K."/>
            <person name="Bandlow W."/>
        </authorList>
    </citation>
    <scope>FUNCTION</scope>
    <scope>CATALYTIC ACTIVITY</scope>
    <scope>SUBCELLULAR LOCATION</scope>
    <scope>SUBSTRATE SPECIFICITY</scope>
</reference>
<reference key="10">
    <citation type="journal article" date="1993" name="Arch. Biochem. Biophys.">
        <title>Characteristics, substrate analysis, and intracellular location of Saccharomyces cerevisiae UMP kinase.</title>
        <authorList>
            <person name="Jong A."/>
            <person name="Yeh Y."/>
            <person name="Ma J.J."/>
        </authorList>
    </citation>
    <scope>FUNCTION</scope>
    <scope>COFACTOR</scope>
    <scope>SUBCELLULAR LOCATION</scope>
    <scope>BIOPHYSICOCHEMICAL PROPERTIES</scope>
    <scope>SUBSTRATE SPECIFICITY</scope>
</reference>
<reference key="11">
    <citation type="journal article" date="2003" name="Nature">
        <title>Global analysis of protein expression in yeast.</title>
        <authorList>
            <person name="Ghaemmaghami S."/>
            <person name="Huh W.-K."/>
            <person name="Bower K."/>
            <person name="Howson R.W."/>
            <person name="Belle A."/>
            <person name="Dephoure N."/>
            <person name="O'Shea E.K."/>
            <person name="Weissman J.S."/>
        </authorList>
    </citation>
    <scope>LEVEL OF PROTEIN EXPRESSION [LARGE SCALE ANALYSIS]</scope>
</reference>
<reference key="12">
    <citation type="journal article" date="2006" name="Biotechnol. Bioeng.">
        <title>Cloning of deoxynucleoside monophosphate kinase genes and biosynthesis of deoxynucleoside diphosphates.</title>
        <authorList>
            <person name="Bao J."/>
            <person name="Ryu D.D."/>
        </authorList>
    </citation>
    <scope>CATALYTIC ACTIVITY</scope>
    <scope>COFACTOR</scope>
    <scope>BIOPHYSICOCHEMICAL PROPERTIES</scope>
</reference>
<reference key="13">
    <citation type="journal article" date="1994" name="J. Mol. Biol.">
        <title>The structure of uridylate kinase with its substrates, showing the transition state geometry.</title>
        <authorList>
            <person name="Mueller-Dieckmann H.-J."/>
            <person name="Schulz G.E."/>
        </authorList>
    </citation>
    <scope>X-RAY CRYSTALLOGRAPHY (1.9 ANGSTROMS) OF 2-204 IN COMPLEX WITH ADP AND AMP</scope>
</reference>
<reference key="14">
    <citation type="journal article" date="1995" name="J. Mol. Biol.">
        <title>Substrate specificity and assembly of the catalytic center derived from two structures of ligated uridylate kinase.</title>
        <authorList>
            <person name="Mueller-Dieckmann H.-J."/>
            <person name="Schulz G.E."/>
        </authorList>
    </citation>
    <scope>X-RAY CRYSTALLOGRAPHY (1.90 ANGSTROMS) OF 2-204 IN COMPLEX WITH ADP AND AMP</scope>
</reference>
<organism>
    <name type="scientific">Saccharomyces cerevisiae (strain ATCC 204508 / S288c)</name>
    <name type="common">Baker's yeast</name>
    <dbReference type="NCBI Taxonomy" id="559292"/>
    <lineage>
        <taxon>Eukaryota</taxon>
        <taxon>Fungi</taxon>
        <taxon>Dikarya</taxon>
        <taxon>Ascomycota</taxon>
        <taxon>Saccharomycotina</taxon>
        <taxon>Saccharomycetes</taxon>
        <taxon>Saccharomycetales</taxon>
        <taxon>Saccharomycetaceae</taxon>
        <taxon>Saccharomyces</taxon>
    </lineage>
</organism>
<sequence length="204" mass="22933">MTAATTSQPAFSPDQVSVIFVLGGPGAGKGTQCEKLVKDYSFVHLSAGDLLRAEQGRAGSQYGELIKNCIKEGQIVPQEITLALLRNAISDNVKANKHKFLIDGFPRKMDQAISFERDIVESKFILFFDCPEDIMLERLLERGKTSGRSDDNIESIKKRFNTFKETSMPVIEYFETKSKVVRVRCDRSVEDVYKDVQDAIRDSL</sequence>
<accession>P15700</accession>
<accession>D6VXR0</accession>